<feature type="chain" id="PRO_1000007891" description="4-diphosphocytidyl-2-C-methyl-D-erythritol kinase">
    <location>
        <begin position="1"/>
        <end position="284"/>
    </location>
</feature>
<feature type="active site" evidence="1">
    <location>
        <position position="14"/>
    </location>
</feature>
<feature type="active site" evidence="1">
    <location>
        <position position="140"/>
    </location>
</feature>
<feature type="binding site" evidence="1">
    <location>
        <begin position="98"/>
        <end position="108"/>
    </location>
    <ligand>
        <name>ATP</name>
        <dbReference type="ChEBI" id="CHEBI:30616"/>
    </ligand>
</feature>
<gene>
    <name evidence="1" type="primary">ispE</name>
    <name type="ordered locus">Shewana3_0766</name>
</gene>
<evidence type="ECO:0000255" key="1">
    <source>
        <dbReference type="HAMAP-Rule" id="MF_00061"/>
    </source>
</evidence>
<name>ISPE_SHESA</name>
<organism>
    <name type="scientific">Shewanella sp. (strain ANA-3)</name>
    <dbReference type="NCBI Taxonomy" id="94122"/>
    <lineage>
        <taxon>Bacteria</taxon>
        <taxon>Pseudomonadati</taxon>
        <taxon>Pseudomonadota</taxon>
        <taxon>Gammaproteobacteria</taxon>
        <taxon>Alteromonadales</taxon>
        <taxon>Shewanellaceae</taxon>
        <taxon>Shewanella</taxon>
    </lineage>
</organism>
<accession>A0KT85</accession>
<dbReference type="EC" id="2.7.1.148" evidence="1"/>
<dbReference type="EMBL" id="CP000469">
    <property type="protein sequence ID" value="ABK47004.1"/>
    <property type="molecule type" value="Genomic_DNA"/>
</dbReference>
<dbReference type="RefSeq" id="WP_011715922.1">
    <property type="nucleotide sequence ID" value="NC_008577.1"/>
</dbReference>
<dbReference type="SMR" id="A0KT85"/>
<dbReference type="STRING" id="94122.Shewana3_0766"/>
<dbReference type="KEGG" id="shn:Shewana3_0766"/>
<dbReference type="eggNOG" id="COG1947">
    <property type="taxonomic scope" value="Bacteria"/>
</dbReference>
<dbReference type="HOGENOM" id="CLU_053057_3_0_6"/>
<dbReference type="OrthoDB" id="9809438at2"/>
<dbReference type="UniPathway" id="UPA00056">
    <property type="reaction ID" value="UER00094"/>
</dbReference>
<dbReference type="Proteomes" id="UP000002589">
    <property type="component" value="Chromosome"/>
</dbReference>
<dbReference type="GO" id="GO:0050515">
    <property type="term" value="F:4-(cytidine 5'-diphospho)-2-C-methyl-D-erythritol kinase activity"/>
    <property type="evidence" value="ECO:0007669"/>
    <property type="project" value="UniProtKB-UniRule"/>
</dbReference>
<dbReference type="GO" id="GO:0005524">
    <property type="term" value="F:ATP binding"/>
    <property type="evidence" value="ECO:0007669"/>
    <property type="project" value="UniProtKB-UniRule"/>
</dbReference>
<dbReference type="GO" id="GO:0019288">
    <property type="term" value="P:isopentenyl diphosphate biosynthetic process, methylerythritol 4-phosphate pathway"/>
    <property type="evidence" value="ECO:0007669"/>
    <property type="project" value="UniProtKB-UniRule"/>
</dbReference>
<dbReference type="GO" id="GO:0016114">
    <property type="term" value="P:terpenoid biosynthetic process"/>
    <property type="evidence" value="ECO:0007669"/>
    <property type="project" value="InterPro"/>
</dbReference>
<dbReference type="FunFam" id="3.30.230.10:FF:000022">
    <property type="entry name" value="4-diphosphocytidyl-2-C-methyl-D-erythritol kinase"/>
    <property type="match status" value="1"/>
</dbReference>
<dbReference type="Gene3D" id="3.30.230.10">
    <property type="match status" value="1"/>
</dbReference>
<dbReference type="Gene3D" id="3.30.70.890">
    <property type="entry name" value="GHMP kinase, C-terminal domain"/>
    <property type="match status" value="1"/>
</dbReference>
<dbReference type="HAMAP" id="MF_00061">
    <property type="entry name" value="IspE"/>
    <property type="match status" value="1"/>
</dbReference>
<dbReference type="InterPro" id="IPR013750">
    <property type="entry name" value="GHMP_kinase_C_dom"/>
</dbReference>
<dbReference type="InterPro" id="IPR036554">
    <property type="entry name" value="GHMP_kinase_C_sf"/>
</dbReference>
<dbReference type="InterPro" id="IPR006204">
    <property type="entry name" value="GHMP_kinase_N_dom"/>
</dbReference>
<dbReference type="InterPro" id="IPR004424">
    <property type="entry name" value="IspE"/>
</dbReference>
<dbReference type="InterPro" id="IPR020568">
    <property type="entry name" value="Ribosomal_Su5_D2-typ_SF"/>
</dbReference>
<dbReference type="InterPro" id="IPR014721">
    <property type="entry name" value="Ribsml_uS5_D2-typ_fold_subgr"/>
</dbReference>
<dbReference type="NCBIfam" id="TIGR00154">
    <property type="entry name" value="ispE"/>
    <property type="match status" value="1"/>
</dbReference>
<dbReference type="PANTHER" id="PTHR43527">
    <property type="entry name" value="4-DIPHOSPHOCYTIDYL-2-C-METHYL-D-ERYTHRITOL KINASE, CHLOROPLASTIC"/>
    <property type="match status" value="1"/>
</dbReference>
<dbReference type="PANTHER" id="PTHR43527:SF2">
    <property type="entry name" value="4-DIPHOSPHOCYTIDYL-2-C-METHYL-D-ERYTHRITOL KINASE, CHLOROPLASTIC"/>
    <property type="match status" value="1"/>
</dbReference>
<dbReference type="Pfam" id="PF08544">
    <property type="entry name" value="GHMP_kinases_C"/>
    <property type="match status" value="1"/>
</dbReference>
<dbReference type="Pfam" id="PF00288">
    <property type="entry name" value="GHMP_kinases_N"/>
    <property type="match status" value="1"/>
</dbReference>
<dbReference type="PIRSF" id="PIRSF010376">
    <property type="entry name" value="IspE"/>
    <property type="match status" value="1"/>
</dbReference>
<dbReference type="SUPFAM" id="SSF55060">
    <property type="entry name" value="GHMP Kinase, C-terminal domain"/>
    <property type="match status" value="1"/>
</dbReference>
<dbReference type="SUPFAM" id="SSF54211">
    <property type="entry name" value="Ribosomal protein S5 domain 2-like"/>
    <property type="match status" value="1"/>
</dbReference>
<sequence length="284" mass="30766">MSNEISRNWPAPAKLNLFLHINGRRADGYHELQTLFQFIDCCDQLDFRVTQTPELILHSNMSAVVADSDNLILRAAKSLQQATSYPGGAEIWLEKRLPMGGGLGGGSSDAATTLVALNQLWNTQLSNDELAAIGLKLGADIPVFIRGFAAFAEGVGERLQAVTPTEFWYLVIAPDAHVSTAAVFQDPLLPRNTPKLGIDTLMSQPWANDCQDLVVSKYPQVAKALGWLLEYAPSRMTGTGACVFGEFSSQQQALAALAKLPSDMQGFVAKGMNISPLIVRLTHP</sequence>
<reference key="1">
    <citation type="submission" date="2006-09" db="EMBL/GenBank/DDBJ databases">
        <title>Complete sequence of chromosome 1 of Shewanella sp. ANA-3.</title>
        <authorList>
            <person name="Copeland A."/>
            <person name="Lucas S."/>
            <person name="Lapidus A."/>
            <person name="Barry K."/>
            <person name="Detter J.C."/>
            <person name="Glavina del Rio T."/>
            <person name="Hammon N."/>
            <person name="Israni S."/>
            <person name="Dalin E."/>
            <person name="Tice H."/>
            <person name="Pitluck S."/>
            <person name="Chertkov O."/>
            <person name="Brettin T."/>
            <person name="Bruce D."/>
            <person name="Han C."/>
            <person name="Tapia R."/>
            <person name="Gilna P."/>
            <person name="Schmutz J."/>
            <person name="Larimer F."/>
            <person name="Land M."/>
            <person name="Hauser L."/>
            <person name="Kyrpides N."/>
            <person name="Kim E."/>
            <person name="Newman D."/>
            <person name="Salticov C."/>
            <person name="Konstantinidis K."/>
            <person name="Klappenback J."/>
            <person name="Tiedje J."/>
            <person name="Richardson P."/>
        </authorList>
    </citation>
    <scope>NUCLEOTIDE SEQUENCE [LARGE SCALE GENOMIC DNA]</scope>
    <source>
        <strain>ANA-3</strain>
    </source>
</reference>
<keyword id="KW-0067">ATP-binding</keyword>
<keyword id="KW-0414">Isoprene biosynthesis</keyword>
<keyword id="KW-0418">Kinase</keyword>
<keyword id="KW-0547">Nucleotide-binding</keyword>
<keyword id="KW-0808">Transferase</keyword>
<protein>
    <recommendedName>
        <fullName evidence="1">4-diphosphocytidyl-2-C-methyl-D-erythritol kinase</fullName>
        <shortName evidence="1">CMK</shortName>
        <ecNumber evidence="1">2.7.1.148</ecNumber>
    </recommendedName>
    <alternativeName>
        <fullName evidence="1">4-(cytidine-5'-diphospho)-2-C-methyl-D-erythritol kinase</fullName>
    </alternativeName>
</protein>
<comment type="function">
    <text evidence="1">Catalyzes the phosphorylation of the position 2 hydroxy group of 4-diphosphocytidyl-2C-methyl-D-erythritol.</text>
</comment>
<comment type="catalytic activity">
    <reaction evidence="1">
        <text>4-CDP-2-C-methyl-D-erythritol + ATP = 4-CDP-2-C-methyl-D-erythritol 2-phosphate + ADP + H(+)</text>
        <dbReference type="Rhea" id="RHEA:18437"/>
        <dbReference type="ChEBI" id="CHEBI:15378"/>
        <dbReference type="ChEBI" id="CHEBI:30616"/>
        <dbReference type="ChEBI" id="CHEBI:57823"/>
        <dbReference type="ChEBI" id="CHEBI:57919"/>
        <dbReference type="ChEBI" id="CHEBI:456216"/>
        <dbReference type="EC" id="2.7.1.148"/>
    </reaction>
</comment>
<comment type="pathway">
    <text evidence="1">Isoprenoid biosynthesis; isopentenyl diphosphate biosynthesis via DXP pathway; isopentenyl diphosphate from 1-deoxy-D-xylulose 5-phosphate: step 3/6.</text>
</comment>
<comment type="similarity">
    <text evidence="1">Belongs to the GHMP kinase family. IspE subfamily.</text>
</comment>
<proteinExistence type="inferred from homology"/>